<reference key="1">
    <citation type="journal article" date="2005" name="Genome Res.">
        <title>Coping with cold: the genome of the versatile marine Antarctica bacterium Pseudoalteromonas haloplanktis TAC125.</title>
        <authorList>
            <person name="Medigue C."/>
            <person name="Krin E."/>
            <person name="Pascal G."/>
            <person name="Barbe V."/>
            <person name="Bernsel A."/>
            <person name="Bertin P.N."/>
            <person name="Cheung F."/>
            <person name="Cruveiller S."/>
            <person name="D'Amico S."/>
            <person name="Duilio A."/>
            <person name="Fang G."/>
            <person name="Feller G."/>
            <person name="Ho C."/>
            <person name="Mangenot S."/>
            <person name="Marino G."/>
            <person name="Nilsson J."/>
            <person name="Parrilli E."/>
            <person name="Rocha E.P.C."/>
            <person name="Rouy Z."/>
            <person name="Sekowska A."/>
            <person name="Tutino M.L."/>
            <person name="Vallenet D."/>
            <person name="von Heijne G."/>
            <person name="Danchin A."/>
        </authorList>
    </citation>
    <scope>NUCLEOTIDE SEQUENCE [LARGE SCALE GENOMIC DNA]</scope>
    <source>
        <strain>TAC 125</strain>
    </source>
</reference>
<evidence type="ECO:0000255" key="1">
    <source>
        <dbReference type="HAMAP-Rule" id="MF_00174"/>
    </source>
</evidence>
<protein>
    <recommendedName>
        <fullName evidence="1">Elongation factor P--(R)-beta-lysine ligase</fullName>
        <shortName evidence="1">EF-P--(R)-beta-lysine ligase</shortName>
        <ecNumber evidence="1">6.3.2.-</ecNumber>
    </recommendedName>
    <alternativeName>
        <fullName evidence="1">EF-P post-translational modification enzyme A</fullName>
    </alternativeName>
    <alternativeName>
        <fullName evidence="1">EF-P-lysine lysyltransferase</fullName>
    </alternativeName>
</protein>
<name>EPMA_PSET1</name>
<proteinExistence type="inferred from homology"/>
<organism>
    <name type="scientific">Pseudoalteromonas translucida (strain TAC 125)</name>
    <dbReference type="NCBI Taxonomy" id="326442"/>
    <lineage>
        <taxon>Bacteria</taxon>
        <taxon>Pseudomonadati</taxon>
        <taxon>Pseudomonadota</taxon>
        <taxon>Gammaproteobacteria</taxon>
        <taxon>Alteromonadales</taxon>
        <taxon>Pseudoalteromonadaceae</taxon>
        <taxon>Pseudoalteromonas</taxon>
    </lineage>
</organism>
<comment type="function">
    <text evidence="1">With EpmB is involved in the beta-lysylation step of the post-translational modification of translation elongation factor P (EF-P). Catalyzes the ATP-dependent activation of (R)-beta-lysine produced by EpmB, forming a lysyl-adenylate, from which the beta-lysyl moiety is then transferred to the epsilon-amino group of a conserved specific lysine residue in EF-P.</text>
</comment>
<comment type="catalytic activity">
    <reaction evidence="1">
        <text>D-beta-lysine + L-lysyl-[protein] + ATP = N(6)-((3R)-3,6-diaminohexanoyl)-L-lysyl-[protein] + AMP + diphosphate + H(+)</text>
        <dbReference type="Rhea" id="RHEA:83435"/>
        <dbReference type="Rhea" id="RHEA-COMP:9752"/>
        <dbReference type="Rhea" id="RHEA-COMP:20131"/>
        <dbReference type="ChEBI" id="CHEBI:15378"/>
        <dbReference type="ChEBI" id="CHEBI:29969"/>
        <dbReference type="ChEBI" id="CHEBI:30616"/>
        <dbReference type="ChEBI" id="CHEBI:33019"/>
        <dbReference type="ChEBI" id="CHEBI:84138"/>
        <dbReference type="ChEBI" id="CHEBI:156053"/>
        <dbReference type="ChEBI" id="CHEBI:456215"/>
    </reaction>
    <physiologicalReaction direction="left-to-right" evidence="1">
        <dbReference type="Rhea" id="RHEA:83436"/>
    </physiologicalReaction>
</comment>
<comment type="subunit">
    <text evidence="1">Homodimer.</text>
</comment>
<comment type="similarity">
    <text evidence="1">Belongs to the class-II aminoacyl-tRNA synthetase family. EpmA subfamily.</text>
</comment>
<dbReference type="EC" id="6.3.2.-" evidence="1"/>
<dbReference type="EMBL" id="CR954246">
    <property type="protein sequence ID" value="CAI85572.1"/>
    <property type="molecule type" value="Genomic_DNA"/>
</dbReference>
<dbReference type="SMR" id="Q3IFP4"/>
<dbReference type="STRING" id="326442.PSHAa0475"/>
<dbReference type="KEGG" id="pha:PSHAa0475"/>
<dbReference type="PATRIC" id="fig|326442.8.peg.452"/>
<dbReference type="eggNOG" id="COG2269">
    <property type="taxonomic scope" value="Bacteria"/>
</dbReference>
<dbReference type="HOGENOM" id="CLU_008255_1_1_6"/>
<dbReference type="BioCyc" id="PHAL326442:PSHA_RS02305-MONOMER"/>
<dbReference type="Proteomes" id="UP000006843">
    <property type="component" value="Chromosome I"/>
</dbReference>
<dbReference type="GO" id="GO:0005829">
    <property type="term" value="C:cytosol"/>
    <property type="evidence" value="ECO:0007669"/>
    <property type="project" value="TreeGrafter"/>
</dbReference>
<dbReference type="GO" id="GO:0016880">
    <property type="term" value="F:acid-ammonia (or amide) ligase activity"/>
    <property type="evidence" value="ECO:0007669"/>
    <property type="project" value="UniProtKB-UniRule"/>
</dbReference>
<dbReference type="GO" id="GO:0005524">
    <property type="term" value="F:ATP binding"/>
    <property type="evidence" value="ECO:0007669"/>
    <property type="project" value="UniProtKB-UniRule"/>
</dbReference>
<dbReference type="GO" id="GO:0004824">
    <property type="term" value="F:lysine-tRNA ligase activity"/>
    <property type="evidence" value="ECO:0007669"/>
    <property type="project" value="InterPro"/>
</dbReference>
<dbReference type="GO" id="GO:0000049">
    <property type="term" value="F:tRNA binding"/>
    <property type="evidence" value="ECO:0007669"/>
    <property type="project" value="TreeGrafter"/>
</dbReference>
<dbReference type="GO" id="GO:0006430">
    <property type="term" value="P:lysyl-tRNA aminoacylation"/>
    <property type="evidence" value="ECO:0007669"/>
    <property type="project" value="InterPro"/>
</dbReference>
<dbReference type="FunFam" id="3.30.930.10:FF:000017">
    <property type="entry name" value="Elongation factor P--(R)-beta-lysine ligase"/>
    <property type="match status" value="1"/>
</dbReference>
<dbReference type="Gene3D" id="3.30.930.10">
    <property type="entry name" value="Bira Bifunctional Protein, Domain 2"/>
    <property type="match status" value="1"/>
</dbReference>
<dbReference type="HAMAP" id="MF_00174">
    <property type="entry name" value="EF_P_modif_A"/>
    <property type="match status" value="1"/>
</dbReference>
<dbReference type="InterPro" id="IPR004364">
    <property type="entry name" value="Aa-tRNA-synt_II"/>
</dbReference>
<dbReference type="InterPro" id="IPR006195">
    <property type="entry name" value="aa-tRNA-synth_II"/>
</dbReference>
<dbReference type="InterPro" id="IPR045864">
    <property type="entry name" value="aa-tRNA-synth_II/BPL/LPL"/>
</dbReference>
<dbReference type="InterPro" id="IPR004525">
    <property type="entry name" value="EpmA"/>
</dbReference>
<dbReference type="InterPro" id="IPR018149">
    <property type="entry name" value="Lys-tRNA-synth_II_C"/>
</dbReference>
<dbReference type="NCBIfam" id="TIGR00462">
    <property type="entry name" value="genX"/>
    <property type="match status" value="1"/>
</dbReference>
<dbReference type="NCBIfam" id="NF006828">
    <property type="entry name" value="PRK09350.1"/>
    <property type="match status" value="1"/>
</dbReference>
<dbReference type="PANTHER" id="PTHR42918:SF6">
    <property type="entry name" value="ELONGATION FACTOR P--(R)-BETA-LYSINE LIGASE"/>
    <property type="match status" value="1"/>
</dbReference>
<dbReference type="PANTHER" id="PTHR42918">
    <property type="entry name" value="LYSYL-TRNA SYNTHETASE"/>
    <property type="match status" value="1"/>
</dbReference>
<dbReference type="Pfam" id="PF00152">
    <property type="entry name" value="tRNA-synt_2"/>
    <property type="match status" value="1"/>
</dbReference>
<dbReference type="PRINTS" id="PR00982">
    <property type="entry name" value="TRNASYNTHLYS"/>
</dbReference>
<dbReference type="SUPFAM" id="SSF55681">
    <property type="entry name" value="Class II aaRS and biotin synthetases"/>
    <property type="match status" value="1"/>
</dbReference>
<dbReference type="PROSITE" id="PS50862">
    <property type="entry name" value="AA_TRNA_LIGASE_II"/>
    <property type="match status" value="1"/>
</dbReference>
<accession>Q3IFP4</accession>
<sequence>MSVNLWAPSASIATLKQRAVILRSIREFFYARNVMEVETPSLSGASVTDIHLVSFNTRFVGPGHASGLELYLQTSPEFAMKRLLAAGSGPIFQLCKAFRNEEAGSHHNPEFTMLEWYRPGFDEFALMAEIDELMQLILDVAPSERLTYQHAFEQVLGLDPLTASLEQLQQLACEQGFADIAKNETHRDTLLQLLFCMKVEPTIGQHKPCFVYHFPASQAALAQICDHDSRVAGRFELYYKNMELANGFNELTNATEQAKRFNDDNEYRKQNGLKQVPMDKHLIAALEHGLAPCAGVALGIDRLVMLATQKSNIKEVIAFDVTRA</sequence>
<feature type="chain" id="PRO_1000023628" description="Elongation factor P--(R)-beta-lysine ligase">
    <location>
        <begin position="1"/>
        <end position="324"/>
    </location>
</feature>
<feature type="binding site" evidence="1">
    <location>
        <begin position="75"/>
        <end position="77"/>
    </location>
    <ligand>
        <name>substrate</name>
    </ligand>
</feature>
<feature type="binding site" evidence="1">
    <location>
        <begin position="99"/>
        <end position="101"/>
    </location>
    <ligand>
        <name>ATP</name>
        <dbReference type="ChEBI" id="CHEBI:30616"/>
    </ligand>
</feature>
<feature type="binding site" evidence="1">
    <location>
        <position position="108"/>
    </location>
    <ligand>
        <name>ATP</name>
        <dbReference type="ChEBI" id="CHEBI:30616"/>
    </ligand>
</feature>
<feature type="binding site" evidence="1">
    <location>
        <position position="117"/>
    </location>
    <ligand>
        <name>substrate</name>
    </ligand>
</feature>
<feature type="binding site" evidence="1">
    <location>
        <begin position="243"/>
        <end position="244"/>
    </location>
    <ligand>
        <name>ATP</name>
        <dbReference type="ChEBI" id="CHEBI:30616"/>
    </ligand>
</feature>
<feature type="binding site" evidence="1">
    <location>
        <position position="250"/>
    </location>
    <ligand>
        <name>substrate</name>
    </ligand>
</feature>
<feature type="binding site" evidence="1">
    <location>
        <position position="299"/>
    </location>
    <ligand>
        <name>ATP</name>
        <dbReference type="ChEBI" id="CHEBI:30616"/>
    </ligand>
</feature>
<gene>
    <name evidence="1" type="primary">epmA</name>
    <name type="synonym">yjeA</name>
    <name type="ordered locus">PSHAa0475</name>
</gene>
<keyword id="KW-0067">ATP-binding</keyword>
<keyword id="KW-0436">Ligase</keyword>
<keyword id="KW-0547">Nucleotide-binding</keyword>
<keyword id="KW-1185">Reference proteome</keyword>